<evidence type="ECO:0000255" key="1">
    <source>
        <dbReference type="HAMAP-Rule" id="MF_00514"/>
    </source>
</evidence>
<evidence type="ECO:0000256" key="2">
    <source>
        <dbReference type="SAM" id="MobiDB-lite"/>
    </source>
</evidence>
<evidence type="ECO:0000305" key="3"/>
<gene>
    <name evidence="1" type="primary">rpmI</name>
    <name type="synonym">rl35</name>
    <name type="ordered locus">TC_0222</name>
</gene>
<sequence length="64" mass="7343">MPKMKSNKSVAARFKLTGSGQLKRTRPGKRHKLSKRSSQQKRNLSKQPLVDQGQVGMYKRMMLV</sequence>
<keyword id="KW-0687">Ribonucleoprotein</keyword>
<keyword id="KW-0689">Ribosomal protein</keyword>
<dbReference type="EMBL" id="AE002160">
    <property type="protein sequence ID" value="AAF39094.1"/>
    <property type="molecule type" value="Genomic_DNA"/>
</dbReference>
<dbReference type="PIR" id="D81727">
    <property type="entry name" value="D81727"/>
</dbReference>
<dbReference type="RefSeq" id="WP_009872221.1">
    <property type="nucleotide sequence ID" value="NZ_CP063055.1"/>
</dbReference>
<dbReference type="SMR" id="P66268"/>
<dbReference type="GeneID" id="93065712"/>
<dbReference type="KEGG" id="cmu:TC_0222"/>
<dbReference type="eggNOG" id="COG0291">
    <property type="taxonomic scope" value="Bacteria"/>
</dbReference>
<dbReference type="HOGENOM" id="CLU_169643_3_0_0"/>
<dbReference type="OrthoDB" id="47476at2"/>
<dbReference type="Proteomes" id="UP000000800">
    <property type="component" value="Chromosome"/>
</dbReference>
<dbReference type="GO" id="GO:0022625">
    <property type="term" value="C:cytosolic large ribosomal subunit"/>
    <property type="evidence" value="ECO:0007669"/>
    <property type="project" value="TreeGrafter"/>
</dbReference>
<dbReference type="GO" id="GO:0003735">
    <property type="term" value="F:structural constituent of ribosome"/>
    <property type="evidence" value="ECO:0007669"/>
    <property type="project" value="InterPro"/>
</dbReference>
<dbReference type="GO" id="GO:0006412">
    <property type="term" value="P:translation"/>
    <property type="evidence" value="ECO:0007669"/>
    <property type="project" value="UniProtKB-UniRule"/>
</dbReference>
<dbReference type="FunFam" id="4.10.410.60:FF:000001">
    <property type="entry name" value="50S ribosomal protein L35"/>
    <property type="match status" value="1"/>
</dbReference>
<dbReference type="Gene3D" id="4.10.410.60">
    <property type="match status" value="1"/>
</dbReference>
<dbReference type="HAMAP" id="MF_00514">
    <property type="entry name" value="Ribosomal_bL35"/>
    <property type="match status" value="1"/>
</dbReference>
<dbReference type="InterPro" id="IPR001706">
    <property type="entry name" value="Ribosomal_bL35"/>
</dbReference>
<dbReference type="InterPro" id="IPR021137">
    <property type="entry name" value="Ribosomal_bL35-like"/>
</dbReference>
<dbReference type="InterPro" id="IPR018265">
    <property type="entry name" value="Ribosomal_bL35_CS"/>
</dbReference>
<dbReference type="InterPro" id="IPR037229">
    <property type="entry name" value="Ribosomal_bL35_sf"/>
</dbReference>
<dbReference type="NCBIfam" id="TIGR00001">
    <property type="entry name" value="rpmI_bact"/>
    <property type="match status" value="1"/>
</dbReference>
<dbReference type="PANTHER" id="PTHR33343">
    <property type="entry name" value="54S RIBOSOMAL PROTEIN BL35M"/>
    <property type="match status" value="1"/>
</dbReference>
<dbReference type="PANTHER" id="PTHR33343:SF1">
    <property type="entry name" value="LARGE RIBOSOMAL SUBUNIT PROTEIN BL35M"/>
    <property type="match status" value="1"/>
</dbReference>
<dbReference type="Pfam" id="PF01632">
    <property type="entry name" value="Ribosomal_L35p"/>
    <property type="match status" value="1"/>
</dbReference>
<dbReference type="PRINTS" id="PR00064">
    <property type="entry name" value="RIBOSOMALL35"/>
</dbReference>
<dbReference type="SUPFAM" id="SSF143034">
    <property type="entry name" value="L35p-like"/>
    <property type="match status" value="1"/>
</dbReference>
<dbReference type="PROSITE" id="PS00936">
    <property type="entry name" value="RIBOSOMAL_L35"/>
    <property type="match status" value="1"/>
</dbReference>
<organism>
    <name type="scientific">Chlamydia muridarum (strain MoPn / Nigg)</name>
    <dbReference type="NCBI Taxonomy" id="243161"/>
    <lineage>
        <taxon>Bacteria</taxon>
        <taxon>Pseudomonadati</taxon>
        <taxon>Chlamydiota</taxon>
        <taxon>Chlamydiia</taxon>
        <taxon>Chlamydiales</taxon>
        <taxon>Chlamydiaceae</taxon>
        <taxon>Chlamydia/Chlamydophila group</taxon>
        <taxon>Chlamydia</taxon>
    </lineage>
</organism>
<protein>
    <recommendedName>
        <fullName evidence="1">Large ribosomal subunit protein bL35</fullName>
    </recommendedName>
    <alternativeName>
        <fullName evidence="3">50S ribosomal protein L35</fullName>
    </alternativeName>
</protein>
<proteinExistence type="inferred from homology"/>
<accession>P66268</accession>
<accession>O84841</accession>
<accession>Q9PL85</accession>
<feature type="chain" id="PRO_0000177346" description="Large ribosomal subunit protein bL35">
    <location>
        <begin position="1"/>
        <end position="64"/>
    </location>
</feature>
<feature type="region of interest" description="Disordered" evidence="2">
    <location>
        <begin position="1"/>
        <end position="55"/>
    </location>
</feature>
<feature type="compositionally biased region" description="Basic residues" evidence="2">
    <location>
        <begin position="23"/>
        <end position="39"/>
    </location>
</feature>
<reference key="1">
    <citation type="journal article" date="2000" name="Nucleic Acids Res.">
        <title>Genome sequences of Chlamydia trachomatis MoPn and Chlamydia pneumoniae AR39.</title>
        <authorList>
            <person name="Read T.D."/>
            <person name="Brunham R.C."/>
            <person name="Shen C."/>
            <person name="Gill S.R."/>
            <person name="Heidelberg J.F."/>
            <person name="White O."/>
            <person name="Hickey E.K."/>
            <person name="Peterson J.D."/>
            <person name="Utterback T.R."/>
            <person name="Berry K.J."/>
            <person name="Bass S."/>
            <person name="Linher K.D."/>
            <person name="Weidman J.F."/>
            <person name="Khouri H.M."/>
            <person name="Craven B."/>
            <person name="Bowman C."/>
            <person name="Dodson R.J."/>
            <person name="Gwinn M.L."/>
            <person name="Nelson W.C."/>
            <person name="DeBoy R.T."/>
            <person name="Kolonay J.F."/>
            <person name="McClarty G."/>
            <person name="Salzberg S.L."/>
            <person name="Eisen J.A."/>
            <person name="Fraser C.M."/>
        </authorList>
    </citation>
    <scope>NUCLEOTIDE SEQUENCE [LARGE SCALE GENOMIC DNA]</scope>
    <source>
        <strain>MoPn / Nigg</strain>
    </source>
</reference>
<name>RL35_CHLMU</name>
<comment type="similarity">
    <text evidence="1">Belongs to the bacterial ribosomal protein bL35 family.</text>
</comment>